<dbReference type="EMBL" id="AE002098">
    <property type="protein sequence ID" value="AAF62332.1"/>
    <property type="molecule type" value="Genomic_DNA"/>
</dbReference>
<dbReference type="RefSeq" id="NP_274399.1">
    <property type="nucleotide sequence ID" value="NC_003112.2"/>
</dbReference>
<dbReference type="RefSeq" id="WP_002219110.1">
    <property type="nucleotide sequence ID" value="NC_003112.2"/>
</dbReference>
<dbReference type="SMR" id="Q9JYX6"/>
<dbReference type="FunCoup" id="Q9JYX6">
    <property type="interactions" value="280"/>
</dbReference>
<dbReference type="STRING" id="122586.NMB1383"/>
<dbReference type="PaxDb" id="122586-NMB1383"/>
<dbReference type="GeneID" id="83616005"/>
<dbReference type="KEGG" id="nme:NMB1383"/>
<dbReference type="PATRIC" id="fig|122586.8.peg.1734"/>
<dbReference type="HOGENOM" id="CLU_068529_2_0_4"/>
<dbReference type="InParanoid" id="Q9JYX6"/>
<dbReference type="OrthoDB" id="287587at2"/>
<dbReference type="Proteomes" id="UP000000425">
    <property type="component" value="Chromosome"/>
</dbReference>
<dbReference type="GO" id="GO:1990230">
    <property type="term" value="C:iron-sulfur cluster transfer complex"/>
    <property type="evidence" value="ECO:0000318"/>
    <property type="project" value="GO_Central"/>
</dbReference>
<dbReference type="GO" id="GO:0001671">
    <property type="term" value="F:ATPase activator activity"/>
    <property type="evidence" value="ECO:0007669"/>
    <property type="project" value="InterPro"/>
</dbReference>
<dbReference type="GO" id="GO:0051087">
    <property type="term" value="F:protein-folding chaperone binding"/>
    <property type="evidence" value="ECO:0007669"/>
    <property type="project" value="InterPro"/>
</dbReference>
<dbReference type="GO" id="GO:0044571">
    <property type="term" value="P:[2Fe-2S] cluster assembly"/>
    <property type="evidence" value="ECO:0007669"/>
    <property type="project" value="InterPro"/>
</dbReference>
<dbReference type="GO" id="GO:0051259">
    <property type="term" value="P:protein complex oligomerization"/>
    <property type="evidence" value="ECO:0007669"/>
    <property type="project" value="InterPro"/>
</dbReference>
<dbReference type="GO" id="GO:0006457">
    <property type="term" value="P:protein folding"/>
    <property type="evidence" value="ECO:0007669"/>
    <property type="project" value="UniProtKB-UniRule"/>
</dbReference>
<dbReference type="CDD" id="cd06257">
    <property type="entry name" value="DnaJ"/>
    <property type="match status" value="1"/>
</dbReference>
<dbReference type="FunFam" id="1.10.287.110:FF:000088">
    <property type="entry name" value="Co-chaperone protein HscB homolog"/>
    <property type="match status" value="1"/>
</dbReference>
<dbReference type="FunFam" id="1.20.1280.20:FF:000004">
    <property type="entry name" value="Co-chaperone protein HscB homolog"/>
    <property type="match status" value="1"/>
</dbReference>
<dbReference type="Gene3D" id="1.10.287.110">
    <property type="entry name" value="DnaJ domain"/>
    <property type="match status" value="1"/>
</dbReference>
<dbReference type="Gene3D" id="1.20.1280.20">
    <property type="entry name" value="HscB, C-terminal domain"/>
    <property type="match status" value="1"/>
</dbReference>
<dbReference type="HAMAP" id="MF_00682">
    <property type="entry name" value="HscB"/>
    <property type="match status" value="1"/>
</dbReference>
<dbReference type="InterPro" id="IPR001623">
    <property type="entry name" value="DnaJ_domain"/>
</dbReference>
<dbReference type="InterPro" id="IPR004640">
    <property type="entry name" value="HscB"/>
</dbReference>
<dbReference type="InterPro" id="IPR036386">
    <property type="entry name" value="HscB_C_sf"/>
</dbReference>
<dbReference type="InterPro" id="IPR009073">
    <property type="entry name" value="HscB_oligo_C"/>
</dbReference>
<dbReference type="InterPro" id="IPR036869">
    <property type="entry name" value="J_dom_sf"/>
</dbReference>
<dbReference type="NCBIfam" id="TIGR00714">
    <property type="entry name" value="hscB"/>
    <property type="match status" value="1"/>
</dbReference>
<dbReference type="PANTHER" id="PTHR14021">
    <property type="entry name" value="IRON-SULFUR CLUSTER CO-CHAPERONE PROTEIN HSCB"/>
    <property type="match status" value="1"/>
</dbReference>
<dbReference type="PANTHER" id="PTHR14021:SF15">
    <property type="entry name" value="IRON-SULFUR CLUSTER CO-CHAPERONE PROTEIN HSCB"/>
    <property type="match status" value="1"/>
</dbReference>
<dbReference type="Pfam" id="PF00226">
    <property type="entry name" value="DnaJ"/>
    <property type="match status" value="1"/>
</dbReference>
<dbReference type="Pfam" id="PF07743">
    <property type="entry name" value="HSCB_C"/>
    <property type="match status" value="1"/>
</dbReference>
<dbReference type="SMART" id="SM00271">
    <property type="entry name" value="DnaJ"/>
    <property type="match status" value="1"/>
</dbReference>
<dbReference type="SUPFAM" id="SSF46565">
    <property type="entry name" value="Chaperone J-domain"/>
    <property type="match status" value="1"/>
</dbReference>
<dbReference type="SUPFAM" id="SSF47144">
    <property type="entry name" value="HSC20 (HSCB), C-terminal oligomerisation domain"/>
    <property type="match status" value="1"/>
</dbReference>
<dbReference type="PROSITE" id="PS50076">
    <property type="entry name" value="DNAJ_2"/>
    <property type="match status" value="1"/>
</dbReference>
<organism>
    <name type="scientific">Neisseria meningitidis serogroup B (strain ATCC BAA-335 / MC58)</name>
    <dbReference type="NCBI Taxonomy" id="122586"/>
    <lineage>
        <taxon>Bacteria</taxon>
        <taxon>Pseudomonadati</taxon>
        <taxon>Pseudomonadota</taxon>
        <taxon>Betaproteobacteria</taxon>
        <taxon>Neisseriales</taxon>
        <taxon>Neisseriaceae</taxon>
        <taxon>Neisseria</taxon>
    </lineage>
</organism>
<evidence type="ECO:0000255" key="1">
    <source>
        <dbReference type="HAMAP-Rule" id="MF_00682"/>
    </source>
</evidence>
<keyword id="KW-0143">Chaperone</keyword>
<keyword id="KW-1185">Reference proteome</keyword>
<protein>
    <recommendedName>
        <fullName evidence="1">Co-chaperone protein HscB homolog</fullName>
    </recommendedName>
</protein>
<name>HSCB_NEIMB</name>
<reference key="1">
    <citation type="journal article" date="2000" name="Science">
        <title>Complete genome sequence of Neisseria meningitidis serogroup B strain MC58.</title>
        <authorList>
            <person name="Tettelin H."/>
            <person name="Saunders N.J."/>
            <person name="Heidelberg J.F."/>
            <person name="Jeffries A.C."/>
            <person name="Nelson K.E."/>
            <person name="Eisen J.A."/>
            <person name="Ketchum K.A."/>
            <person name="Hood D.W."/>
            <person name="Peden J.F."/>
            <person name="Dodson R.J."/>
            <person name="Nelson W.C."/>
            <person name="Gwinn M.L."/>
            <person name="DeBoy R.T."/>
            <person name="Peterson J.D."/>
            <person name="Hickey E.K."/>
            <person name="Haft D.H."/>
            <person name="Salzberg S.L."/>
            <person name="White O."/>
            <person name="Fleischmann R.D."/>
            <person name="Dougherty B.A."/>
            <person name="Mason T.M."/>
            <person name="Ciecko A."/>
            <person name="Parksey D.S."/>
            <person name="Blair E."/>
            <person name="Cittone H."/>
            <person name="Clark E.B."/>
            <person name="Cotton M.D."/>
            <person name="Utterback T.R."/>
            <person name="Khouri H.M."/>
            <person name="Qin H."/>
            <person name="Vamathevan J.J."/>
            <person name="Gill J."/>
            <person name="Scarlato V."/>
            <person name="Masignani V."/>
            <person name="Pizza M."/>
            <person name="Grandi G."/>
            <person name="Sun L."/>
            <person name="Smith H.O."/>
            <person name="Fraser C.M."/>
            <person name="Moxon E.R."/>
            <person name="Rappuoli R."/>
            <person name="Venter J.C."/>
        </authorList>
    </citation>
    <scope>NUCLEOTIDE SEQUENCE [LARGE SCALE GENOMIC DNA]</scope>
    <source>
        <strain>ATCC BAA-335 / MC58</strain>
    </source>
</reference>
<accession>Q9JYX6</accession>
<feature type="chain" id="PRO_0000070975" description="Co-chaperone protein HscB homolog">
    <location>
        <begin position="1"/>
        <end position="166"/>
    </location>
</feature>
<feature type="domain" description="J" evidence="1">
    <location>
        <begin position="3"/>
        <end position="75"/>
    </location>
</feature>
<comment type="function">
    <text evidence="1">Co-chaperone involved in the maturation of iron-sulfur cluster-containing proteins. Seems to help targeting proteins to be folded toward HscA.</text>
</comment>
<comment type="subunit">
    <text evidence="1">Interacts with HscA and stimulates its ATPase activity.</text>
</comment>
<comment type="similarity">
    <text evidence="1">Belongs to the HscB family.</text>
</comment>
<sequence>MSQYFTLFRIEPAFDIDTENLEQTYRALAARFHPDKFASASAFEQKQAVMMSSTINDAYRTLKNPIDRAAYLLKTSGIDADAPEHTAFAPEFLMQQMEWRETLMEARAGNDLESLKNLDNEIRDEQEKLFCGLKQSFARQDYDTAAQQVRQGRFLDKLRNEISSAL</sequence>
<proteinExistence type="inferred from homology"/>
<gene>
    <name evidence="1" type="primary">hscB</name>
    <name type="ordered locus">NMB1383</name>
</gene>